<proteinExistence type="inferred from homology"/>
<gene>
    <name evidence="1" type="primary">rplU</name>
    <name type="ordered locus">ACICU_02983</name>
</gene>
<name>RL21_ACIBC</name>
<accession>B2HXU9</accession>
<organism>
    <name type="scientific">Acinetobacter baumannii (strain ACICU)</name>
    <dbReference type="NCBI Taxonomy" id="405416"/>
    <lineage>
        <taxon>Bacteria</taxon>
        <taxon>Pseudomonadati</taxon>
        <taxon>Pseudomonadota</taxon>
        <taxon>Gammaproteobacteria</taxon>
        <taxon>Moraxellales</taxon>
        <taxon>Moraxellaceae</taxon>
        <taxon>Acinetobacter</taxon>
        <taxon>Acinetobacter calcoaceticus/baumannii complex</taxon>
    </lineage>
</organism>
<protein>
    <recommendedName>
        <fullName evidence="1">Large ribosomal subunit protein bL21</fullName>
    </recommendedName>
    <alternativeName>
        <fullName evidence="2">50S ribosomal protein L21</fullName>
    </alternativeName>
</protein>
<feature type="chain" id="PRO_1000143741" description="Large ribosomal subunit protein bL21">
    <location>
        <begin position="1"/>
        <end position="103"/>
    </location>
</feature>
<keyword id="KW-0687">Ribonucleoprotein</keyword>
<keyword id="KW-0689">Ribosomal protein</keyword>
<keyword id="KW-0694">RNA-binding</keyword>
<keyword id="KW-0699">rRNA-binding</keyword>
<dbReference type="EMBL" id="CP000863">
    <property type="protein sequence ID" value="ACC58295.1"/>
    <property type="molecule type" value="Genomic_DNA"/>
</dbReference>
<dbReference type="RefSeq" id="WP_000271409.1">
    <property type="nucleotide sequence ID" value="NZ_CP031380.1"/>
</dbReference>
<dbReference type="SMR" id="B2HXU9"/>
<dbReference type="GeneID" id="92895006"/>
<dbReference type="KEGG" id="abc:ACICU_02983"/>
<dbReference type="HOGENOM" id="CLU_061463_3_2_6"/>
<dbReference type="Proteomes" id="UP000008839">
    <property type="component" value="Chromosome"/>
</dbReference>
<dbReference type="GO" id="GO:0005737">
    <property type="term" value="C:cytoplasm"/>
    <property type="evidence" value="ECO:0007669"/>
    <property type="project" value="UniProtKB-ARBA"/>
</dbReference>
<dbReference type="GO" id="GO:1990904">
    <property type="term" value="C:ribonucleoprotein complex"/>
    <property type="evidence" value="ECO:0007669"/>
    <property type="project" value="UniProtKB-KW"/>
</dbReference>
<dbReference type="GO" id="GO:0005840">
    <property type="term" value="C:ribosome"/>
    <property type="evidence" value="ECO:0007669"/>
    <property type="project" value="UniProtKB-KW"/>
</dbReference>
<dbReference type="GO" id="GO:0019843">
    <property type="term" value="F:rRNA binding"/>
    <property type="evidence" value="ECO:0007669"/>
    <property type="project" value="UniProtKB-UniRule"/>
</dbReference>
<dbReference type="GO" id="GO:0003735">
    <property type="term" value="F:structural constituent of ribosome"/>
    <property type="evidence" value="ECO:0007669"/>
    <property type="project" value="InterPro"/>
</dbReference>
<dbReference type="GO" id="GO:0006412">
    <property type="term" value="P:translation"/>
    <property type="evidence" value="ECO:0007669"/>
    <property type="project" value="UniProtKB-UniRule"/>
</dbReference>
<dbReference type="HAMAP" id="MF_01363">
    <property type="entry name" value="Ribosomal_bL21"/>
    <property type="match status" value="1"/>
</dbReference>
<dbReference type="InterPro" id="IPR028909">
    <property type="entry name" value="bL21-like"/>
</dbReference>
<dbReference type="InterPro" id="IPR036164">
    <property type="entry name" value="bL21-like_sf"/>
</dbReference>
<dbReference type="InterPro" id="IPR001787">
    <property type="entry name" value="Ribosomal_bL21"/>
</dbReference>
<dbReference type="InterPro" id="IPR018258">
    <property type="entry name" value="Ribosomal_bL21_CS"/>
</dbReference>
<dbReference type="NCBIfam" id="TIGR00061">
    <property type="entry name" value="L21"/>
    <property type="match status" value="1"/>
</dbReference>
<dbReference type="PANTHER" id="PTHR21349">
    <property type="entry name" value="50S RIBOSOMAL PROTEIN L21"/>
    <property type="match status" value="1"/>
</dbReference>
<dbReference type="PANTHER" id="PTHR21349:SF0">
    <property type="entry name" value="LARGE RIBOSOMAL SUBUNIT PROTEIN BL21M"/>
    <property type="match status" value="1"/>
</dbReference>
<dbReference type="Pfam" id="PF00829">
    <property type="entry name" value="Ribosomal_L21p"/>
    <property type="match status" value="1"/>
</dbReference>
<dbReference type="SUPFAM" id="SSF141091">
    <property type="entry name" value="L21p-like"/>
    <property type="match status" value="1"/>
</dbReference>
<dbReference type="PROSITE" id="PS01169">
    <property type="entry name" value="RIBOSOMAL_L21"/>
    <property type="match status" value="1"/>
</dbReference>
<reference key="1">
    <citation type="journal article" date="2008" name="Antimicrob. Agents Chemother.">
        <title>Whole-genome pyrosequencing of an epidemic multidrug-resistant Acinetobacter baumannii strain belonging to the European clone II group.</title>
        <authorList>
            <person name="Iacono M."/>
            <person name="Villa L."/>
            <person name="Fortini D."/>
            <person name="Bordoni R."/>
            <person name="Imperi F."/>
            <person name="Bonnal R.J."/>
            <person name="Sicheritz-Ponten T."/>
            <person name="De Bellis G."/>
            <person name="Visca P."/>
            <person name="Cassone A."/>
            <person name="Carattoli A."/>
        </authorList>
    </citation>
    <scope>NUCLEOTIDE SEQUENCE [LARGE SCALE GENOMIC DNA]</scope>
    <source>
        <strain>ACICU</strain>
    </source>
</reference>
<sequence>MYAVIQSGGKQHRVVEGETLKVELLKAESGATITFDDVLMVVNGDNIQIGAPVVAGAKVTAEVIGHGRHDKIRIIKMRRRKHYRKQQGHRQWFTELKITGISG</sequence>
<evidence type="ECO:0000255" key="1">
    <source>
        <dbReference type="HAMAP-Rule" id="MF_01363"/>
    </source>
</evidence>
<evidence type="ECO:0000305" key="2"/>
<comment type="function">
    <text evidence="1">This protein binds to 23S rRNA in the presence of protein L20.</text>
</comment>
<comment type="subunit">
    <text evidence="1">Part of the 50S ribosomal subunit. Contacts protein L20.</text>
</comment>
<comment type="similarity">
    <text evidence="1">Belongs to the bacterial ribosomal protein bL21 family.</text>
</comment>